<organism>
    <name type="scientific">Arabidopsis thaliana</name>
    <name type="common">Mouse-ear cress</name>
    <dbReference type="NCBI Taxonomy" id="3702"/>
    <lineage>
        <taxon>Eukaryota</taxon>
        <taxon>Viridiplantae</taxon>
        <taxon>Streptophyta</taxon>
        <taxon>Embryophyta</taxon>
        <taxon>Tracheophyta</taxon>
        <taxon>Spermatophyta</taxon>
        <taxon>Magnoliopsida</taxon>
        <taxon>eudicotyledons</taxon>
        <taxon>Gunneridae</taxon>
        <taxon>Pentapetalae</taxon>
        <taxon>rosids</taxon>
        <taxon>malvids</taxon>
        <taxon>Brassicales</taxon>
        <taxon>Brassicaceae</taxon>
        <taxon>Camelineae</taxon>
        <taxon>Arabidopsis</taxon>
    </lineage>
</organism>
<evidence type="ECO:0000269" key="1">
    <source>
    </source>
</evidence>
<evidence type="ECO:0000303" key="2">
    <source>
    </source>
</evidence>
<evidence type="ECO:0000305" key="3"/>
<accession>P80830</accession>
<feature type="chain" id="PRO_0000079638" description="42 kDa cell wall protein">
    <location>
        <begin position="1"/>
        <end position="7" status="greater than"/>
    </location>
</feature>
<feature type="non-terminal residue" evidence="2">
    <location>
        <position position="7"/>
    </location>
</feature>
<protein>
    <recommendedName>
        <fullName>42 kDa cell wall protein</fullName>
    </recommendedName>
</protein>
<proteinExistence type="evidence at protein level"/>
<sequence>EYFIGVN</sequence>
<reference evidence="3" key="1">
    <citation type="journal article" date="1997" name="J. Biol. Chem.">
        <title>Differential extraction and protein sequencing reveals major differences in patterns of primary cell wall proteins from plants.</title>
        <authorList>
            <person name="Robertson D."/>
            <person name="Mitchell G.P."/>
            <person name="Gilroy J.S."/>
            <person name="Gerrish C."/>
            <person name="Bolwell G.P."/>
            <person name="Slabas A.R."/>
        </authorList>
    </citation>
    <scope>PROTEIN SEQUENCE</scope>
    <scope>SUBCELLULAR LOCATION</scope>
    <source>
        <strain>cv. Landsberg erecta</strain>
    </source>
</reference>
<keyword id="KW-0134">Cell wall</keyword>
<keyword id="KW-0903">Direct protein sequencing</keyword>
<keyword id="KW-0964">Secreted</keyword>
<name>CWP06_ARATH</name>
<dbReference type="GO" id="GO:0005576">
    <property type="term" value="C:extracellular region"/>
    <property type="evidence" value="ECO:0007669"/>
    <property type="project" value="UniProtKB-KW"/>
</dbReference>
<comment type="subcellular location">
    <subcellularLocation>
        <location evidence="1">Secreted</location>
        <location evidence="1">Cell wall</location>
    </subcellularLocation>
</comment>